<feature type="chain" id="PRO_1000196441" description="Small ribosomal subunit protein bS16">
    <location>
        <begin position="1"/>
        <end position="161"/>
    </location>
</feature>
<feature type="region of interest" description="Disordered" evidence="2">
    <location>
        <begin position="114"/>
        <end position="161"/>
    </location>
</feature>
<feature type="compositionally biased region" description="Basic residues" evidence="2">
    <location>
        <begin position="124"/>
        <end position="133"/>
    </location>
</feature>
<accession>B2HJL2</accession>
<keyword id="KW-1185">Reference proteome</keyword>
<keyword id="KW-0687">Ribonucleoprotein</keyword>
<keyword id="KW-0689">Ribosomal protein</keyword>
<comment type="similarity">
    <text evidence="1">Belongs to the bacterial ribosomal protein bS16 family.</text>
</comment>
<protein>
    <recommendedName>
        <fullName evidence="1">Small ribosomal subunit protein bS16</fullName>
    </recommendedName>
    <alternativeName>
        <fullName evidence="3">30S ribosomal protein S16</fullName>
    </alternativeName>
</protein>
<reference key="1">
    <citation type="journal article" date="2008" name="Genome Res.">
        <title>Insights from the complete genome sequence of Mycobacterium marinum on the evolution of Mycobacterium tuberculosis.</title>
        <authorList>
            <person name="Stinear T.P."/>
            <person name="Seemann T."/>
            <person name="Harrison P.F."/>
            <person name="Jenkin G.A."/>
            <person name="Davies J.K."/>
            <person name="Johnson P.D."/>
            <person name="Abdellah Z."/>
            <person name="Arrowsmith C."/>
            <person name="Chillingworth T."/>
            <person name="Churcher C."/>
            <person name="Clarke K."/>
            <person name="Cronin A."/>
            <person name="Davis P."/>
            <person name="Goodhead I."/>
            <person name="Holroyd N."/>
            <person name="Jagels K."/>
            <person name="Lord A."/>
            <person name="Moule S."/>
            <person name="Mungall K."/>
            <person name="Norbertczak H."/>
            <person name="Quail M.A."/>
            <person name="Rabbinowitsch E."/>
            <person name="Walker D."/>
            <person name="White B."/>
            <person name="Whitehead S."/>
            <person name="Small P.L."/>
            <person name="Brosch R."/>
            <person name="Ramakrishnan L."/>
            <person name="Fischbach M.A."/>
            <person name="Parkhill J."/>
            <person name="Cole S.T."/>
        </authorList>
    </citation>
    <scope>NUCLEOTIDE SEQUENCE [LARGE SCALE GENOMIC DNA]</scope>
    <source>
        <strain>ATCC BAA-535 / M</strain>
    </source>
</reference>
<organism>
    <name type="scientific">Mycobacterium marinum (strain ATCC BAA-535 / M)</name>
    <dbReference type="NCBI Taxonomy" id="216594"/>
    <lineage>
        <taxon>Bacteria</taxon>
        <taxon>Bacillati</taxon>
        <taxon>Actinomycetota</taxon>
        <taxon>Actinomycetes</taxon>
        <taxon>Mycobacteriales</taxon>
        <taxon>Mycobacteriaceae</taxon>
        <taxon>Mycobacterium</taxon>
        <taxon>Mycobacterium ulcerans group</taxon>
    </lineage>
</organism>
<evidence type="ECO:0000255" key="1">
    <source>
        <dbReference type="HAMAP-Rule" id="MF_00385"/>
    </source>
</evidence>
<evidence type="ECO:0000256" key="2">
    <source>
        <dbReference type="SAM" id="MobiDB-lite"/>
    </source>
</evidence>
<evidence type="ECO:0000305" key="3"/>
<gene>
    <name evidence="1" type="primary">rpsP</name>
    <name type="ordered locus">MMAR_1799</name>
</gene>
<sequence length="161" mass="17399">MAVKIKLTRLGKIRNPQYRIAVADARTRRDGRSIEVIGRYHPKEEPSLIEINSERAQYWLSVGAQPTEPVLKLLKITGDWQKFKGLPGAEGRLKVKPPKPSKLELFNAALAAAEGGPTTEATKPKKKSPAKKAKGGEGDADAAAEKVEASAEGEQTESAES</sequence>
<proteinExistence type="inferred from homology"/>
<dbReference type="EMBL" id="CP000854">
    <property type="protein sequence ID" value="ACC40248.1"/>
    <property type="molecule type" value="Genomic_DNA"/>
</dbReference>
<dbReference type="RefSeq" id="WP_011740100.1">
    <property type="nucleotide sequence ID" value="NC_010612.1"/>
</dbReference>
<dbReference type="SMR" id="B2HJL2"/>
<dbReference type="STRING" id="216594.MMAR_1799"/>
<dbReference type="KEGG" id="mmi:MMAR_1799"/>
<dbReference type="eggNOG" id="COG0228">
    <property type="taxonomic scope" value="Bacteria"/>
</dbReference>
<dbReference type="HOGENOM" id="CLU_100590_1_1_11"/>
<dbReference type="OrthoDB" id="9807878at2"/>
<dbReference type="Proteomes" id="UP000001190">
    <property type="component" value="Chromosome"/>
</dbReference>
<dbReference type="GO" id="GO:0005737">
    <property type="term" value="C:cytoplasm"/>
    <property type="evidence" value="ECO:0007669"/>
    <property type="project" value="UniProtKB-ARBA"/>
</dbReference>
<dbReference type="GO" id="GO:0015935">
    <property type="term" value="C:small ribosomal subunit"/>
    <property type="evidence" value="ECO:0007669"/>
    <property type="project" value="TreeGrafter"/>
</dbReference>
<dbReference type="GO" id="GO:0003735">
    <property type="term" value="F:structural constituent of ribosome"/>
    <property type="evidence" value="ECO:0007669"/>
    <property type="project" value="InterPro"/>
</dbReference>
<dbReference type="GO" id="GO:0006412">
    <property type="term" value="P:translation"/>
    <property type="evidence" value="ECO:0007669"/>
    <property type="project" value="UniProtKB-UniRule"/>
</dbReference>
<dbReference type="Gene3D" id="3.30.1320.10">
    <property type="match status" value="1"/>
</dbReference>
<dbReference type="HAMAP" id="MF_00385">
    <property type="entry name" value="Ribosomal_bS16"/>
    <property type="match status" value="1"/>
</dbReference>
<dbReference type="InterPro" id="IPR000307">
    <property type="entry name" value="Ribosomal_bS16"/>
</dbReference>
<dbReference type="InterPro" id="IPR020592">
    <property type="entry name" value="Ribosomal_bS16_CS"/>
</dbReference>
<dbReference type="InterPro" id="IPR023803">
    <property type="entry name" value="Ribosomal_bS16_dom_sf"/>
</dbReference>
<dbReference type="NCBIfam" id="NF011093">
    <property type="entry name" value="PRK14520.1"/>
    <property type="match status" value="1"/>
</dbReference>
<dbReference type="NCBIfam" id="TIGR00002">
    <property type="entry name" value="S16"/>
    <property type="match status" value="1"/>
</dbReference>
<dbReference type="PANTHER" id="PTHR12919">
    <property type="entry name" value="30S RIBOSOMAL PROTEIN S16"/>
    <property type="match status" value="1"/>
</dbReference>
<dbReference type="PANTHER" id="PTHR12919:SF20">
    <property type="entry name" value="SMALL RIBOSOMAL SUBUNIT PROTEIN BS16M"/>
    <property type="match status" value="1"/>
</dbReference>
<dbReference type="Pfam" id="PF00886">
    <property type="entry name" value="Ribosomal_S16"/>
    <property type="match status" value="1"/>
</dbReference>
<dbReference type="SUPFAM" id="SSF54565">
    <property type="entry name" value="Ribosomal protein S16"/>
    <property type="match status" value="1"/>
</dbReference>
<dbReference type="PROSITE" id="PS00732">
    <property type="entry name" value="RIBOSOMAL_S16"/>
    <property type="match status" value="1"/>
</dbReference>
<name>RS16_MYCMM</name>